<keyword id="KW-1185">Reference proteome</keyword>
<keyword id="KW-0687">Ribonucleoprotein</keyword>
<keyword id="KW-0689">Ribosomal protein</keyword>
<dbReference type="EMBL" id="CP000142">
    <property type="protein sequence ID" value="ABA87968.1"/>
    <property type="molecule type" value="Genomic_DNA"/>
</dbReference>
<dbReference type="RefSeq" id="WP_011340411.1">
    <property type="nucleotide sequence ID" value="NC_007498.2"/>
</dbReference>
<dbReference type="SMR" id="Q3A6N9"/>
<dbReference type="STRING" id="338963.Pcar_0709"/>
<dbReference type="KEGG" id="pca:Pcar_0709"/>
<dbReference type="eggNOG" id="COG0255">
    <property type="taxonomic scope" value="Bacteria"/>
</dbReference>
<dbReference type="HOGENOM" id="CLU_158491_5_2_7"/>
<dbReference type="OrthoDB" id="9815192at2"/>
<dbReference type="Proteomes" id="UP000002534">
    <property type="component" value="Chromosome"/>
</dbReference>
<dbReference type="GO" id="GO:0022625">
    <property type="term" value="C:cytosolic large ribosomal subunit"/>
    <property type="evidence" value="ECO:0007669"/>
    <property type="project" value="TreeGrafter"/>
</dbReference>
<dbReference type="GO" id="GO:0003735">
    <property type="term" value="F:structural constituent of ribosome"/>
    <property type="evidence" value="ECO:0007669"/>
    <property type="project" value="InterPro"/>
</dbReference>
<dbReference type="GO" id="GO:0006412">
    <property type="term" value="P:translation"/>
    <property type="evidence" value="ECO:0007669"/>
    <property type="project" value="UniProtKB-UniRule"/>
</dbReference>
<dbReference type="CDD" id="cd00427">
    <property type="entry name" value="Ribosomal_L29_HIP"/>
    <property type="match status" value="1"/>
</dbReference>
<dbReference type="FunFam" id="1.10.287.310:FF:000001">
    <property type="entry name" value="50S ribosomal protein L29"/>
    <property type="match status" value="1"/>
</dbReference>
<dbReference type="Gene3D" id="1.10.287.310">
    <property type="match status" value="1"/>
</dbReference>
<dbReference type="HAMAP" id="MF_00374">
    <property type="entry name" value="Ribosomal_uL29"/>
    <property type="match status" value="1"/>
</dbReference>
<dbReference type="InterPro" id="IPR050063">
    <property type="entry name" value="Ribosomal_protein_uL29"/>
</dbReference>
<dbReference type="InterPro" id="IPR001854">
    <property type="entry name" value="Ribosomal_uL29"/>
</dbReference>
<dbReference type="InterPro" id="IPR036049">
    <property type="entry name" value="Ribosomal_uL29_sf"/>
</dbReference>
<dbReference type="NCBIfam" id="TIGR00012">
    <property type="entry name" value="L29"/>
    <property type="match status" value="1"/>
</dbReference>
<dbReference type="PANTHER" id="PTHR10916">
    <property type="entry name" value="60S RIBOSOMAL PROTEIN L35/50S RIBOSOMAL PROTEIN L29"/>
    <property type="match status" value="1"/>
</dbReference>
<dbReference type="PANTHER" id="PTHR10916:SF0">
    <property type="entry name" value="LARGE RIBOSOMAL SUBUNIT PROTEIN UL29C"/>
    <property type="match status" value="1"/>
</dbReference>
<dbReference type="Pfam" id="PF00831">
    <property type="entry name" value="Ribosomal_L29"/>
    <property type="match status" value="1"/>
</dbReference>
<dbReference type="SUPFAM" id="SSF46561">
    <property type="entry name" value="Ribosomal protein L29 (L29p)"/>
    <property type="match status" value="1"/>
</dbReference>
<gene>
    <name evidence="1" type="primary">rpmC</name>
    <name type="ordered locus">Pcar_0709</name>
</gene>
<reference key="1">
    <citation type="submission" date="2005-10" db="EMBL/GenBank/DDBJ databases">
        <title>Complete sequence of Pelobacter carbinolicus DSM 2380.</title>
        <authorList>
            <person name="Copeland A."/>
            <person name="Lucas S."/>
            <person name="Lapidus A."/>
            <person name="Barry K."/>
            <person name="Detter J.C."/>
            <person name="Glavina T."/>
            <person name="Hammon N."/>
            <person name="Israni S."/>
            <person name="Pitluck S."/>
            <person name="Chertkov O."/>
            <person name="Schmutz J."/>
            <person name="Larimer F."/>
            <person name="Land M."/>
            <person name="Kyrpides N."/>
            <person name="Ivanova N."/>
            <person name="Richardson P."/>
        </authorList>
    </citation>
    <scope>NUCLEOTIDE SEQUENCE [LARGE SCALE GENOMIC DNA]</scope>
    <source>
        <strain>DSM 2380 / NBRC 103641 / GraBd1</strain>
    </source>
</reference>
<accession>Q3A6N9</accession>
<comment type="similarity">
    <text evidence="1">Belongs to the universal ribosomal protein uL29 family.</text>
</comment>
<sequence length="62" mass="7306">MKASELRDLTVEELEKKVEELNQELFNLKFQLATGQLENSARLPQTRRDIARVHTVLRQKRS</sequence>
<organism>
    <name type="scientific">Syntrophotalea carbinolica (strain DSM 2380 / NBRC 103641 / GraBd1)</name>
    <name type="common">Pelobacter carbinolicus</name>
    <dbReference type="NCBI Taxonomy" id="338963"/>
    <lineage>
        <taxon>Bacteria</taxon>
        <taxon>Pseudomonadati</taxon>
        <taxon>Thermodesulfobacteriota</taxon>
        <taxon>Desulfuromonadia</taxon>
        <taxon>Desulfuromonadales</taxon>
        <taxon>Syntrophotaleaceae</taxon>
        <taxon>Syntrophotalea</taxon>
    </lineage>
</organism>
<feature type="chain" id="PRO_1000007547" description="Large ribosomal subunit protein uL29">
    <location>
        <begin position="1"/>
        <end position="62"/>
    </location>
</feature>
<name>RL29_SYNC1</name>
<protein>
    <recommendedName>
        <fullName evidence="1">Large ribosomal subunit protein uL29</fullName>
    </recommendedName>
    <alternativeName>
        <fullName evidence="2">50S ribosomal protein L29</fullName>
    </alternativeName>
</protein>
<proteinExistence type="inferred from homology"/>
<evidence type="ECO:0000255" key="1">
    <source>
        <dbReference type="HAMAP-Rule" id="MF_00374"/>
    </source>
</evidence>
<evidence type="ECO:0000305" key="2"/>